<dbReference type="EMBL" id="AK030792">
    <property type="protein sequence ID" value="BAC27139.1"/>
    <property type="molecule type" value="mRNA"/>
</dbReference>
<dbReference type="EMBL" id="AL844163">
    <property type="status" value="NOT_ANNOTATED_CDS"/>
    <property type="molecule type" value="Genomic_DNA"/>
</dbReference>
<dbReference type="EMBL" id="AL929070">
    <property type="status" value="NOT_ANNOTATED_CDS"/>
    <property type="molecule type" value="Genomic_DNA"/>
</dbReference>
<dbReference type="EMBL" id="CR626863">
    <property type="status" value="NOT_ANNOTATED_CDS"/>
    <property type="molecule type" value="Genomic_DNA"/>
</dbReference>
<dbReference type="EMBL" id="BC062650">
    <property type="protein sequence ID" value="AAH62650.1"/>
    <property type="molecule type" value="mRNA"/>
</dbReference>
<dbReference type="CCDS" id="CCDS50587.1">
    <molecule id="Q6P5U8-1"/>
</dbReference>
<dbReference type="RefSeq" id="NP_001001178.1">
    <molecule id="Q6P5U8-1"/>
    <property type="nucleotide sequence ID" value="NM_001001178.3"/>
</dbReference>
<dbReference type="RefSeq" id="XP_017172996.1">
    <molecule id="Q6P5U8-1"/>
    <property type="nucleotide sequence ID" value="XM_017317507.3"/>
</dbReference>
<dbReference type="SMR" id="Q6P5U8"/>
<dbReference type="FunCoup" id="Q6P5U8">
    <property type="interactions" value="42"/>
</dbReference>
<dbReference type="STRING" id="10090.ENSMUSP00000076871"/>
<dbReference type="PhosphoSitePlus" id="Q6P5U8"/>
<dbReference type="PaxDb" id="10090-ENSMUSP00000076871"/>
<dbReference type="Antibodypedia" id="33710">
    <property type="antibodies" value="82 antibodies from 17 providers"/>
</dbReference>
<dbReference type="Ensembl" id="ENSMUST00000077687.6">
    <molecule id="Q6P5U8-1"/>
    <property type="protein sequence ID" value="ENSMUSP00000076871.6"/>
    <property type="gene ID" value="ENSMUSG00000036641.10"/>
</dbReference>
<dbReference type="GeneID" id="227933"/>
<dbReference type="KEGG" id="mmu:227933"/>
<dbReference type="UCSC" id="uc008jsy.1">
    <molecule id="Q6P5U8-2"/>
    <property type="organism name" value="mouse"/>
</dbReference>
<dbReference type="UCSC" id="uc029txn.1">
    <molecule id="Q6P5U8-1"/>
    <property type="organism name" value="mouse"/>
</dbReference>
<dbReference type="AGR" id="MGI:3039583"/>
<dbReference type="CTD" id="130940"/>
<dbReference type="MGI" id="MGI:3039583">
    <property type="gene designation" value="Ccdc148"/>
</dbReference>
<dbReference type="VEuPathDB" id="HostDB:ENSMUSG00000036641"/>
<dbReference type="eggNOG" id="ENOG502QV5F">
    <property type="taxonomic scope" value="Eukaryota"/>
</dbReference>
<dbReference type="GeneTree" id="ENSGT00940000153988"/>
<dbReference type="HOGENOM" id="CLU_032590_0_0_1"/>
<dbReference type="InParanoid" id="Q6P5U8"/>
<dbReference type="OMA" id="KLKKYWA"/>
<dbReference type="PhylomeDB" id="Q6P5U8"/>
<dbReference type="TreeFam" id="TF332726"/>
<dbReference type="BioGRID-ORCS" id="227933">
    <property type="hits" value="0 hits in 60 CRISPR screens"/>
</dbReference>
<dbReference type="ChiTaRS" id="Ccdc148">
    <property type="organism name" value="mouse"/>
</dbReference>
<dbReference type="PRO" id="PR:Q6P5U8"/>
<dbReference type="Proteomes" id="UP000000589">
    <property type="component" value="Chromosome 2"/>
</dbReference>
<dbReference type="RNAct" id="Q6P5U8">
    <property type="molecule type" value="protein"/>
</dbReference>
<dbReference type="Bgee" id="ENSMUSG00000036641">
    <property type="expression patterns" value="Expressed in spermatocyte and 64 other cell types or tissues"/>
</dbReference>
<dbReference type="ExpressionAtlas" id="Q6P5U8">
    <property type="expression patterns" value="baseline and differential"/>
</dbReference>
<dbReference type="InterPro" id="IPR039902">
    <property type="entry name" value="CCDC148/CCDC112"/>
</dbReference>
<dbReference type="PANTHER" id="PTHR21549:SF1">
    <property type="entry name" value="COILED-COIL DOMAIN-CONTAINING PROTEIN 148"/>
    <property type="match status" value="1"/>
</dbReference>
<dbReference type="PANTHER" id="PTHR21549">
    <property type="entry name" value="MUTATED IN BLADDER CANCER 1"/>
    <property type="match status" value="1"/>
</dbReference>
<keyword id="KW-0025">Alternative splicing</keyword>
<keyword id="KW-0175">Coiled coil</keyword>
<keyword id="KW-1185">Reference proteome</keyword>
<reference key="1">
    <citation type="journal article" date="2005" name="Science">
        <title>The transcriptional landscape of the mammalian genome.</title>
        <authorList>
            <person name="Carninci P."/>
            <person name="Kasukawa T."/>
            <person name="Katayama S."/>
            <person name="Gough J."/>
            <person name="Frith M.C."/>
            <person name="Maeda N."/>
            <person name="Oyama R."/>
            <person name="Ravasi T."/>
            <person name="Lenhard B."/>
            <person name="Wells C."/>
            <person name="Kodzius R."/>
            <person name="Shimokawa K."/>
            <person name="Bajic V.B."/>
            <person name="Brenner S.E."/>
            <person name="Batalov S."/>
            <person name="Forrest A.R."/>
            <person name="Zavolan M."/>
            <person name="Davis M.J."/>
            <person name="Wilming L.G."/>
            <person name="Aidinis V."/>
            <person name="Allen J.E."/>
            <person name="Ambesi-Impiombato A."/>
            <person name="Apweiler R."/>
            <person name="Aturaliya R.N."/>
            <person name="Bailey T.L."/>
            <person name="Bansal M."/>
            <person name="Baxter L."/>
            <person name="Beisel K.W."/>
            <person name="Bersano T."/>
            <person name="Bono H."/>
            <person name="Chalk A.M."/>
            <person name="Chiu K.P."/>
            <person name="Choudhary V."/>
            <person name="Christoffels A."/>
            <person name="Clutterbuck D.R."/>
            <person name="Crowe M.L."/>
            <person name="Dalla E."/>
            <person name="Dalrymple B.P."/>
            <person name="de Bono B."/>
            <person name="Della Gatta G."/>
            <person name="di Bernardo D."/>
            <person name="Down T."/>
            <person name="Engstrom P."/>
            <person name="Fagiolini M."/>
            <person name="Faulkner G."/>
            <person name="Fletcher C.F."/>
            <person name="Fukushima T."/>
            <person name="Furuno M."/>
            <person name="Futaki S."/>
            <person name="Gariboldi M."/>
            <person name="Georgii-Hemming P."/>
            <person name="Gingeras T.R."/>
            <person name="Gojobori T."/>
            <person name="Green R.E."/>
            <person name="Gustincich S."/>
            <person name="Harbers M."/>
            <person name="Hayashi Y."/>
            <person name="Hensch T.K."/>
            <person name="Hirokawa N."/>
            <person name="Hill D."/>
            <person name="Huminiecki L."/>
            <person name="Iacono M."/>
            <person name="Ikeo K."/>
            <person name="Iwama A."/>
            <person name="Ishikawa T."/>
            <person name="Jakt M."/>
            <person name="Kanapin A."/>
            <person name="Katoh M."/>
            <person name="Kawasawa Y."/>
            <person name="Kelso J."/>
            <person name="Kitamura H."/>
            <person name="Kitano H."/>
            <person name="Kollias G."/>
            <person name="Krishnan S.P."/>
            <person name="Kruger A."/>
            <person name="Kummerfeld S.K."/>
            <person name="Kurochkin I.V."/>
            <person name="Lareau L.F."/>
            <person name="Lazarevic D."/>
            <person name="Lipovich L."/>
            <person name="Liu J."/>
            <person name="Liuni S."/>
            <person name="McWilliam S."/>
            <person name="Madan Babu M."/>
            <person name="Madera M."/>
            <person name="Marchionni L."/>
            <person name="Matsuda H."/>
            <person name="Matsuzawa S."/>
            <person name="Miki H."/>
            <person name="Mignone F."/>
            <person name="Miyake S."/>
            <person name="Morris K."/>
            <person name="Mottagui-Tabar S."/>
            <person name="Mulder N."/>
            <person name="Nakano N."/>
            <person name="Nakauchi H."/>
            <person name="Ng P."/>
            <person name="Nilsson R."/>
            <person name="Nishiguchi S."/>
            <person name="Nishikawa S."/>
            <person name="Nori F."/>
            <person name="Ohara O."/>
            <person name="Okazaki Y."/>
            <person name="Orlando V."/>
            <person name="Pang K.C."/>
            <person name="Pavan W.J."/>
            <person name="Pavesi G."/>
            <person name="Pesole G."/>
            <person name="Petrovsky N."/>
            <person name="Piazza S."/>
            <person name="Reed J."/>
            <person name="Reid J.F."/>
            <person name="Ring B.Z."/>
            <person name="Ringwald M."/>
            <person name="Rost B."/>
            <person name="Ruan Y."/>
            <person name="Salzberg S.L."/>
            <person name="Sandelin A."/>
            <person name="Schneider C."/>
            <person name="Schoenbach C."/>
            <person name="Sekiguchi K."/>
            <person name="Semple C.A."/>
            <person name="Seno S."/>
            <person name="Sessa L."/>
            <person name="Sheng Y."/>
            <person name="Shibata Y."/>
            <person name="Shimada H."/>
            <person name="Shimada K."/>
            <person name="Silva D."/>
            <person name="Sinclair B."/>
            <person name="Sperling S."/>
            <person name="Stupka E."/>
            <person name="Sugiura K."/>
            <person name="Sultana R."/>
            <person name="Takenaka Y."/>
            <person name="Taki K."/>
            <person name="Tammoja K."/>
            <person name="Tan S.L."/>
            <person name="Tang S."/>
            <person name="Taylor M.S."/>
            <person name="Tegner J."/>
            <person name="Teichmann S.A."/>
            <person name="Ueda H.R."/>
            <person name="van Nimwegen E."/>
            <person name="Verardo R."/>
            <person name="Wei C.L."/>
            <person name="Yagi K."/>
            <person name="Yamanishi H."/>
            <person name="Zabarovsky E."/>
            <person name="Zhu S."/>
            <person name="Zimmer A."/>
            <person name="Hide W."/>
            <person name="Bult C."/>
            <person name="Grimmond S.M."/>
            <person name="Teasdale R.D."/>
            <person name="Liu E.T."/>
            <person name="Brusic V."/>
            <person name="Quackenbush J."/>
            <person name="Wahlestedt C."/>
            <person name="Mattick J.S."/>
            <person name="Hume D.A."/>
            <person name="Kai C."/>
            <person name="Sasaki D."/>
            <person name="Tomaru Y."/>
            <person name="Fukuda S."/>
            <person name="Kanamori-Katayama M."/>
            <person name="Suzuki M."/>
            <person name="Aoki J."/>
            <person name="Arakawa T."/>
            <person name="Iida J."/>
            <person name="Imamura K."/>
            <person name="Itoh M."/>
            <person name="Kato T."/>
            <person name="Kawaji H."/>
            <person name="Kawagashira N."/>
            <person name="Kawashima T."/>
            <person name="Kojima M."/>
            <person name="Kondo S."/>
            <person name="Konno H."/>
            <person name="Nakano K."/>
            <person name="Ninomiya N."/>
            <person name="Nishio T."/>
            <person name="Okada M."/>
            <person name="Plessy C."/>
            <person name="Shibata K."/>
            <person name="Shiraki T."/>
            <person name="Suzuki S."/>
            <person name="Tagami M."/>
            <person name="Waki K."/>
            <person name="Watahiki A."/>
            <person name="Okamura-Oho Y."/>
            <person name="Suzuki H."/>
            <person name="Kawai J."/>
            <person name="Hayashizaki Y."/>
        </authorList>
    </citation>
    <scope>NUCLEOTIDE SEQUENCE [LARGE SCALE MRNA] (ISOFORM 2)</scope>
    <source>
        <strain>C57BL/6J</strain>
        <tissue>Thymus</tissue>
    </source>
</reference>
<reference key="2">
    <citation type="journal article" date="2009" name="PLoS Biol.">
        <title>Lineage-specific biology revealed by a finished genome assembly of the mouse.</title>
        <authorList>
            <person name="Church D.M."/>
            <person name="Goodstadt L."/>
            <person name="Hillier L.W."/>
            <person name="Zody M.C."/>
            <person name="Goldstein S."/>
            <person name="She X."/>
            <person name="Bult C.J."/>
            <person name="Agarwala R."/>
            <person name="Cherry J.L."/>
            <person name="DiCuccio M."/>
            <person name="Hlavina W."/>
            <person name="Kapustin Y."/>
            <person name="Meric P."/>
            <person name="Maglott D."/>
            <person name="Birtle Z."/>
            <person name="Marques A.C."/>
            <person name="Graves T."/>
            <person name="Zhou S."/>
            <person name="Teague B."/>
            <person name="Potamousis K."/>
            <person name="Churas C."/>
            <person name="Place M."/>
            <person name="Herschleb J."/>
            <person name="Runnheim R."/>
            <person name="Forrest D."/>
            <person name="Amos-Landgraf J."/>
            <person name="Schwartz D.C."/>
            <person name="Cheng Z."/>
            <person name="Lindblad-Toh K."/>
            <person name="Eichler E.E."/>
            <person name="Ponting C.P."/>
        </authorList>
    </citation>
    <scope>NUCLEOTIDE SEQUENCE [LARGE SCALE GENOMIC DNA]</scope>
    <source>
        <strain>C57BL/6J</strain>
    </source>
</reference>
<reference key="3">
    <citation type="journal article" date="2004" name="Genome Res.">
        <title>The status, quality, and expansion of the NIH full-length cDNA project: the Mammalian Gene Collection (MGC).</title>
        <authorList>
            <consortium name="The MGC Project Team"/>
        </authorList>
    </citation>
    <scope>NUCLEOTIDE SEQUENCE [LARGE SCALE MRNA] (ISOFORM 1)</scope>
    <source>
        <strain>C57BL/6J</strain>
        <tissue>Brain</tissue>
    </source>
</reference>
<evidence type="ECO:0000255" key="1"/>
<evidence type="ECO:0000303" key="2">
    <source>
    </source>
</evidence>
<gene>
    <name type="primary">Ccdc148</name>
</gene>
<proteinExistence type="evidence at transcript level"/>
<feature type="chain" id="PRO_0000326065" description="Coiled-coil domain-containing protein 148">
    <location>
        <begin position="1"/>
        <end position="527"/>
    </location>
</feature>
<feature type="coiled-coil region" evidence="1">
    <location>
        <begin position="289"/>
        <end position="353"/>
    </location>
</feature>
<feature type="coiled-coil region" evidence="1">
    <location>
        <begin position="401"/>
        <end position="438"/>
    </location>
</feature>
<feature type="splice variant" id="VSP_032537" description="In isoform 2." evidence="2">
    <location>
        <begin position="1"/>
        <end position="359"/>
    </location>
</feature>
<feature type="splice variant" id="VSP_032538" description="In isoform 2." evidence="2">
    <original>IISDPRLRFELALREAGLHKTQYAKEMLPKIGPQKPPRKDTESTVFKV</original>
    <variation>VLMGIALLVQSLG</variation>
    <location>
        <begin position="480"/>
        <end position="527"/>
    </location>
</feature>
<accession>Q6P5U8</accession>
<accession>A2APN1</accession>
<accession>Q8CDB5</accession>
<sequence>MLIKQHKQVWWQEQERLKGIRCKLESEIRSCLNEESIGSECFCELMNFEKELSEEWCAYLTAVIDPIQQLRTGLKRWYPTSQSAPCHEGSDATEVLEEVDFVKKQSKAAFERLHQEQWHLEEDLLDLSVKLLDHSSEEKPNLLSEQPMELVTLDCPYPDLKSSILNEFCNFTERYQEKLEDFDLQLEDIRSNFQLSAEEHWTYQAVLDQYPGNLLGRRALYLDMLQRYFPHKSRHHLVEHEKYCDQYHFAREQRRILIDNWSRSRKDFIQKAMLTLLEACAAHEMGSLLAKDRRRQQELCADLKAKVSQWRAQQEELSRLEMEISARRREREEEKEKLWKKKELLRREETEIKIRKYWAMKQQKWQEMEKRDLRRLEELKKLMAEQSVKDRERVKYRQELLEKRLMERKKLALQEVQEEEERERRLEALRKQVAVAVQSDPVRMMSETLAWKARTGSESEEEFILQKPLFTLTTYNEQQIISDPRLRFELALREAGLHKTQYAKEMLPKIGPQKPPRKDTESTVFKV</sequence>
<comment type="alternative products">
    <event type="alternative splicing"/>
    <isoform>
        <id>Q6P5U8-1</id>
        <name>1</name>
        <sequence type="displayed"/>
    </isoform>
    <isoform>
        <id>Q6P5U8-2</id>
        <name>2</name>
        <sequence type="described" ref="VSP_032537 VSP_032538"/>
    </isoform>
</comment>
<name>CC148_MOUSE</name>
<protein>
    <recommendedName>
        <fullName>Coiled-coil domain-containing protein 148</fullName>
    </recommendedName>
</protein>
<organism>
    <name type="scientific">Mus musculus</name>
    <name type="common">Mouse</name>
    <dbReference type="NCBI Taxonomy" id="10090"/>
    <lineage>
        <taxon>Eukaryota</taxon>
        <taxon>Metazoa</taxon>
        <taxon>Chordata</taxon>
        <taxon>Craniata</taxon>
        <taxon>Vertebrata</taxon>
        <taxon>Euteleostomi</taxon>
        <taxon>Mammalia</taxon>
        <taxon>Eutheria</taxon>
        <taxon>Euarchontoglires</taxon>
        <taxon>Glires</taxon>
        <taxon>Rodentia</taxon>
        <taxon>Myomorpha</taxon>
        <taxon>Muroidea</taxon>
        <taxon>Muridae</taxon>
        <taxon>Murinae</taxon>
        <taxon>Mus</taxon>
        <taxon>Mus</taxon>
    </lineage>
</organism>